<accession>Q8XZ85</accession>
<dbReference type="EC" id="6.3.5.5" evidence="1"/>
<dbReference type="EMBL" id="AL646052">
    <property type="protein sequence ID" value="CAD15221.1"/>
    <property type="molecule type" value="Genomic_DNA"/>
</dbReference>
<dbReference type="RefSeq" id="WP_011001466.1">
    <property type="nucleotide sequence ID" value="NC_003295.1"/>
</dbReference>
<dbReference type="SMR" id="Q8XZ85"/>
<dbReference type="STRING" id="267608.RSc1519"/>
<dbReference type="MEROPS" id="C26.954"/>
<dbReference type="EnsemblBacteria" id="CAD15221">
    <property type="protein sequence ID" value="CAD15221"/>
    <property type="gene ID" value="RSc1519"/>
</dbReference>
<dbReference type="KEGG" id="rso:RSc1519"/>
<dbReference type="eggNOG" id="COG0505">
    <property type="taxonomic scope" value="Bacteria"/>
</dbReference>
<dbReference type="HOGENOM" id="CLU_035901_2_1_4"/>
<dbReference type="UniPathway" id="UPA00068">
    <property type="reaction ID" value="UER00171"/>
</dbReference>
<dbReference type="UniPathway" id="UPA00070">
    <property type="reaction ID" value="UER00115"/>
</dbReference>
<dbReference type="Proteomes" id="UP000001436">
    <property type="component" value="Chromosome"/>
</dbReference>
<dbReference type="GO" id="GO:0005524">
    <property type="term" value="F:ATP binding"/>
    <property type="evidence" value="ECO:0007669"/>
    <property type="project" value="UniProtKB-UniRule"/>
</dbReference>
<dbReference type="GO" id="GO:0004088">
    <property type="term" value="F:carbamoyl-phosphate synthase (glutamine-hydrolyzing) activity"/>
    <property type="evidence" value="ECO:0007669"/>
    <property type="project" value="UniProtKB-UniRule"/>
</dbReference>
<dbReference type="GO" id="GO:0004359">
    <property type="term" value="F:glutaminase activity"/>
    <property type="evidence" value="ECO:0007669"/>
    <property type="project" value="RHEA"/>
</dbReference>
<dbReference type="GO" id="GO:0006207">
    <property type="term" value="P:'de novo' pyrimidine nucleobase biosynthetic process"/>
    <property type="evidence" value="ECO:0007669"/>
    <property type="project" value="InterPro"/>
</dbReference>
<dbReference type="GO" id="GO:0044205">
    <property type="term" value="P:'de novo' UMP biosynthetic process"/>
    <property type="evidence" value="ECO:0007669"/>
    <property type="project" value="UniProtKB-UniRule"/>
</dbReference>
<dbReference type="GO" id="GO:0006541">
    <property type="term" value="P:glutamine metabolic process"/>
    <property type="evidence" value="ECO:0007669"/>
    <property type="project" value="InterPro"/>
</dbReference>
<dbReference type="GO" id="GO:0006526">
    <property type="term" value="P:L-arginine biosynthetic process"/>
    <property type="evidence" value="ECO:0007669"/>
    <property type="project" value="UniProtKB-UniRule"/>
</dbReference>
<dbReference type="CDD" id="cd01744">
    <property type="entry name" value="GATase1_CPSase"/>
    <property type="match status" value="1"/>
</dbReference>
<dbReference type="FunFam" id="3.40.50.880:FF:000011">
    <property type="entry name" value="Carbamoyl-phosphate synthase small chain"/>
    <property type="match status" value="1"/>
</dbReference>
<dbReference type="FunFam" id="3.50.30.20:FF:000001">
    <property type="entry name" value="Carbamoyl-phosphate synthase small chain"/>
    <property type="match status" value="1"/>
</dbReference>
<dbReference type="Gene3D" id="3.40.50.880">
    <property type="match status" value="1"/>
</dbReference>
<dbReference type="Gene3D" id="3.50.30.20">
    <property type="entry name" value="Carbamoyl-phosphate synthase small subunit, N-terminal domain"/>
    <property type="match status" value="1"/>
</dbReference>
<dbReference type="HAMAP" id="MF_01209">
    <property type="entry name" value="CPSase_S_chain"/>
    <property type="match status" value="1"/>
</dbReference>
<dbReference type="InterPro" id="IPR050472">
    <property type="entry name" value="Anth_synth/Amidotransfase"/>
</dbReference>
<dbReference type="InterPro" id="IPR006274">
    <property type="entry name" value="CarbamoylP_synth_ssu"/>
</dbReference>
<dbReference type="InterPro" id="IPR002474">
    <property type="entry name" value="CarbamoylP_synth_ssu_N"/>
</dbReference>
<dbReference type="InterPro" id="IPR036480">
    <property type="entry name" value="CarbP_synth_ssu_N_sf"/>
</dbReference>
<dbReference type="InterPro" id="IPR029062">
    <property type="entry name" value="Class_I_gatase-like"/>
</dbReference>
<dbReference type="InterPro" id="IPR035686">
    <property type="entry name" value="CPSase_GATase1"/>
</dbReference>
<dbReference type="InterPro" id="IPR017926">
    <property type="entry name" value="GATASE"/>
</dbReference>
<dbReference type="NCBIfam" id="TIGR01368">
    <property type="entry name" value="CPSaseIIsmall"/>
    <property type="match status" value="1"/>
</dbReference>
<dbReference type="NCBIfam" id="NF009475">
    <property type="entry name" value="PRK12838.1"/>
    <property type="match status" value="1"/>
</dbReference>
<dbReference type="PANTHER" id="PTHR43418:SF7">
    <property type="entry name" value="CARBAMOYL-PHOSPHATE SYNTHASE SMALL CHAIN"/>
    <property type="match status" value="1"/>
</dbReference>
<dbReference type="PANTHER" id="PTHR43418">
    <property type="entry name" value="MULTIFUNCTIONAL TRYPTOPHAN BIOSYNTHESIS PROTEIN-RELATED"/>
    <property type="match status" value="1"/>
</dbReference>
<dbReference type="Pfam" id="PF00988">
    <property type="entry name" value="CPSase_sm_chain"/>
    <property type="match status" value="1"/>
</dbReference>
<dbReference type="Pfam" id="PF00117">
    <property type="entry name" value="GATase"/>
    <property type="match status" value="1"/>
</dbReference>
<dbReference type="PRINTS" id="PR00099">
    <property type="entry name" value="CPSGATASE"/>
</dbReference>
<dbReference type="PRINTS" id="PR00096">
    <property type="entry name" value="GATASE"/>
</dbReference>
<dbReference type="SMART" id="SM01097">
    <property type="entry name" value="CPSase_sm_chain"/>
    <property type="match status" value="1"/>
</dbReference>
<dbReference type="SUPFAM" id="SSF52021">
    <property type="entry name" value="Carbamoyl phosphate synthetase, small subunit N-terminal domain"/>
    <property type="match status" value="1"/>
</dbReference>
<dbReference type="SUPFAM" id="SSF52317">
    <property type="entry name" value="Class I glutamine amidotransferase-like"/>
    <property type="match status" value="1"/>
</dbReference>
<dbReference type="PROSITE" id="PS51273">
    <property type="entry name" value="GATASE_TYPE_1"/>
    <property type="match status" value="1"/>
</dbReference>
<feature type="chain" id="PRO_0000112308" description="Carbamoyl phosphate synthase small chain">
    <location>
        <begin position="1"/>
        <end position="378"/>
    </location>
</feature>
<feature type="domain" description="Glutamine amidotransferase type-1" evidence="1">
    <location>
        <begin position="192"/>
        <end position="378"/>
    </location>
</feature>
<feature type="region of interest" description="CPSase" evidence="1">
    <location>
        <begin position="1"/>
        <end position="188"/>
    </location>
</feature>
<feature type="active site" description="Nucleophile" evidence="1">
    <location>
        <position position="268"/>
    </location>
</feature>
<feature type="active site" evidence="1">
    <location>
        <position position="352"/>
    </location>
</feature>
<feature type="active site" evidence="1">
    <location>
        <position position="354"/>
    </location>
</feature>
<feature type="binding site" evidence="1">
    <location>
        <position position="50"/>
    </location>
    <ligand>
        <name>L-glutamine</name>
        <dbReference type="ChEBI" id="CHEBI:58359"/>
    </ligand>
</feature>
<feature type="binding site" evidence="1">
    <location>
        <position position="240"/>
    </location>
    <ligand>
        <name>L-glutamine</name>
        <dbReference type="ChEBI" id="CHEBI:58359"/>
    </ligand>
</feature>
<feature type="binding site" evidence="1">
    <location>
        <position position="242"/>
    </location>
    <ligand>
        <name>L-glutamine</name>
        <dbReference type="ChEBI" id="CHEBI:58359"/>
    </ligand>
</feature>
<feature type="binding site" evidence="1">
    <location>
        <position position="269"/>
    </location>
    <ligand>
        <name>L-glutamine</name>
        <dbReference type="ChEBI" id="CHEBI:58359"/>
    </ligand>
</feature>
<feature type="binding site" evidence="1">
    <location>
        <position position="272"/>
    </location>
    <ligand>
        <name>L-glutamine</name>
        <dbReference type="ChEBI" id="CHEBI:58359"/>
    </ligand>
</feature>
<feature type="binding site" evidence="1">
    <location>
        <position position="310"/>
    </location>
    <ligand>
        <name>L-glutamine</name>
        <dbReference type="ChEBI" id="CHEBI:58359"/>
    </ligand>
</feature>
<feature type="binding site" evidence="1">
    <location>
        <position position="312"/>
    </location>
    <ligand>
        <name>L-glutamine</name>
        <dbReference type="ChEBI" id="CHEBI:58359"/>
    </ligand>
</feature>
<feature type="binding site" evidence="1">
    <location>
        <position position="313"/>
    </location>
    <ligand>
        <name>L-glutamine</name>
        <dbReference type="ChEBI" id="CHEBI:58359"/>
    </ligand>
</feature>
<gene>
    <name evidence="1" type="primary">carA</name>
    <name type="ordered locus">RSc1519</name>
    <name type="ORF">RS03785</name>
</gene>
<name>CARA_RALN1</name>
<evidence type="ECO:0000255" key="1">
    <source>
        <dbReference type="HAMAP-Rule" id="MF_01209"/>
    </source>
</evidence>
<sequence length="378" mass="40946">MLPSFPPAILALADGTVFRGYSIGAAGHTIGEVVFNTAITGYQEILTDPSYSRQIVTLTYPHIGNVGVNREDVEATKVHAAGLIIKDLPILASNFRQEHSLSHYLKGEKVVAIAGIDTRKLTRILREKGAQNGCVLAGEDNPQKAIDLARSFPGLSGMDLAKVVSVTQPYEWNQTEWALGRGYGVQDKPQFHVVAYDFGVKYNILRMLAERGCRVTVVPAQTSAADALAYNPDGVFLSNGPGDPQPCDYAIAATKDFIERRIPTFGICLGHQIMGLAVGGKTLKMKTGHHGANHPVKDLQDGRVIITSQNHGFAVDPESLPANARVTHVSLFDGTLQGFELTDRPAFCFQGHPEASPGPHDIGYLFDRFTAAMAERKQ</sequence>
<protein>
    <recommendedName>
        <fullName evidence="1">Carbamoyl phosphate synthase small chain</fullName>
        <ecNumber evidence="1">6.3.5.5</ecNumber>
    </recommendedName>
    <alternativeName>
        <fullName evidence="1">Carbamoyl phosphate synthetase glutamine chain</fullName>
    </alternativeName>
</protein>
<comment type="function">
    <text evidence="1">Small subunit of the glutamine-dependent carbamoyl phosphate synthetase (CPSase). CPSase catalyzes the formation of carbamoyl phosphate from the ammonia moiety of glutamine, carbonate, and phosphate donated by ATP, constituting the first step of 2 biosynthetic pathways, one leading to arginine and/or urea and the other to pyrimidine nucleotides. The small subunit (glutamine amidotransferase) binds and cleaves glutamine to supply the large subunit with the substrate ammonia.</text>
</comment>
<comment type="catalytic activity">
    <reaction evidence="1">
        <text>hydrogencarbonate + L-glutamine + 2 ATP + H2O = carbamoyl phosphate + L-glutamate + 2 ADP + phosphate + 2 H(+)</text>
        <dbReference type="Rhea" id="RHEA:18633"/>
        <dbReference type="ChEBI" id="CHEBI:15377"/>
        <dbReference type="ChEBI" id="CHEBI:15378"/>
        <dbReference type="ChEBI" id="CHEBI:17544"/>
        <dbReference type="ChEBI" id="CHEBI:29985"/>
        <dbReference type="ChEBI" id="CHEBI:30616"/>
        <dbReference type="ChEBI" id="CHEBI:43474"/>
        <dbReference type="ChEBI" id="CHEBI:58228"/>
        <dbReference type="ChEBI" id="CHEBI:58359"/>
        <dbReference type="ChEBI" id="CHEBI:456216"/>
        <dbReference type="EC" id="6.3.5.5"/>
    </reaction>
</comment>
<comment type="catalytic activity">
    <molecule>Carbamoyl phosphate synthase small chain</molecule>
    <reaction evidence="1">
        <text>L-glutamine + H2O = L-glutamate + NH4(+)</text>
        <dbReference type="Rhea" id="RHEA:15889"/>
        <dbReference type="ChEBI" id="CHEBI:15377"/>
        <dbReference type="ChEBI" id="CHEBI:28938"/>
        <dbReference type="ChEBI" id="CHEBI:29985"/>
        <dbReference type="ChEBI" id="CHEBI:58359"/>
    </reaction>
</comment>
<comment type="pathway">
    <text evidence="1">Amino-acid biosynthesis; L-arginine biosynthesis; carbamoyl phosphate from bicarbonate: step 1/1.</text>
</comment>
<comment type="pathway">
    <text evidence="1">Pyrimidine metabolism; UMP biosynthesis via de novo pathway; (S)-dihydroorotate from bicarbonate: step 1/3.</text>
</comment>
<comment type="subunit">
    <text evidence="1">Composed of two chains; the small (or glutamine) chain promotes the hydrolysis of glutamine to ammonia, which is used by the large (or ammonia) chain to synthesize carbamoyl phosphate. Tetramer of heterodimers (alpha,beta)4.</text>
</comment>
<comment type="similarity">
    <text evidence="1">Belongs to the CarA family.</text>
</comment>
<organism>
    <name type="scientific">Ralstonia nicotianae (strain ATCC BAA-1114 / GMI1000)</name>
    <name type="common">Ralstonia solanacearum</name>
    <dbReference type="NCBI Taxonomy" id="267608"/>
    <lineage>
        <taxon>Bacteria</taxon>
        <taxon>Pseudomonadati</taxon>
        <taxon>Pseudomonadota</taxon>
        <taxon>Betaproteobacteria</taxon>
        <taxon>Burkholderiales</taxon>
        <taxon>Burkholderiaceae</taxon>
        <taxon>Ralstonia</taxon>
        <taxon>Ralstonia solanacearum species complex</taxon>
    </lineage>
</organism>
<keyword id="KW-0028">Amino-acid biosynthesis</keyword>
<keyword id="KW-0055">Arginine biosynthesis</keyword>
<keyword id="KW-0067">ATP-binding</keyword>
<keyword id="KW-0315">Glutamine amidotransferase</keyword>
<keyword id="KW-0436">Ligase</keyword>
<keyword id="KW-0547">Nucleotide-binding</keyword>
<keyword id="KW-0665">Pyrimidine biosynthesis</keyword>
<keyword id="KW-1185">Reference proteome</keyword>
<proteinExistence type="inferred from homology"/>
<reference key="1">
    <citation type="journal article" date="2002" name="Nature">
        <title>Genome sequence of the plant pathogen Ralstonia solanacearum.</title>
        <authorList>
            <person name="Salanoubat M."/>
            <person name="Genin S."/>
            <person name="Artiguenave F."/>
            <person name="Gouzy J."/>
            <person name="Mangenot S."/>
            <person name="Arlat M."/>
            <person name="Billault A."/>
            <person name="Brottier P."/>
            <person name="Camus J.-C."/>
            <person name="Cattolico L."/>
            <person name="Chandler M."/>
            <person name="Choisne N."/>
            <person name="Claudel-Renard C."/>
            <person name="Cunnac S."/>
            <person name="Demange N."/>
            <person name="Gaspin C."/>
            <person name="Lavie M."/>
            <person name="Moisan A."/>
            <person name="Robert C."/>
            <person name="Saurin W."/>
            <person name="Schiex T."/>
            <person name="Siguier P."/>
            <person name="Thebault P."/>
            <person name="Whalen M."/>
            <person name="Wincker P."/>
            <person name="Levy M."/>
            <person name="Weissenbach J."/>
            <person name="Boucher C.A."/>
        </authorList>
    </citation>
    <scope>NUCLEOTIDE SEQUENCE [LARGE SCALE GENOMIC DNA]</scope>
    <source>
        <strain>ATCC BAA-1114 / GMI1000</strain>
    </source>
</reference>